<organism>
    <name type="scientific">Renibacterium salmoninarum (strain ATCC 33209 / DSM 20767 / JCM 11484 / NBRC 15589 / NCIMB 2235)</name>
    <dbReference type="NCBI Taxonomy" id="288705"/>
    <lineage>
        <taxon>Bacteria</taxon>
        <taxon>Bacillati</taxon>
        <taxon>Actinomycetota</taxon>
        <taxon>Actinomycetes</taxon>
        <taxon>Micrococcales</taxon>
        <taxon>Micrococcaceae</taxon>
        <taxon>Renibacterium</taxon>
    </lineage>
</organism>
<dbReference type="EC" id="6.3.4.5" evidence="1"/>
<dbReference type="EMBL" id="CP000910">
    <property type="protein sequence ID" value="ABY22530.1"/>
    <property type="molecule type" value="Genomic_DNA"/>
</dbReference>
<dbReference type="SMR" id="A9WQ90"/>
<dbReference type="STRING" id="288705.RSal33209_0783"/>
<dbReference type="KEGG" id="rsa:RSal33209_0783"/>
<dbReference type="eggNOG" id="COG0137">
    <property type="taxonomic scope" value="Bacteria"/>
</dbReference>
<dbReference type="HOGENOM" id="CLU_032784_4_2_11"/>
<dbReference type="UniPathway" id="UPA00068">
    <property type="reaction ID" value="UER00113"/>
</dbReference>
<dbReference type="Proteomes" id="UP000002007">
    <property type="component" value="Chromosome"/>
</dbReference>
<dbReference type="GO" id="GO:0005737">
    <property type="term" value="C:cytoplasm"/>
    <property type="evidence" value="ECO:0007669"/>
    <property type="project" value="UniProtKB-SubCell"/>
</dbReference>
<dbReference type="GO" id="GO:0004055">
    <property type="term" value="F:argininosuccinate synthase activity"/>
    <property type="evidence" value="ECO:0007669"/>
    <property type="project" value="UniProtKB-UniRule"/>
</dbReference>
<dbReference type="GO" id="GO:0005524">
    <property type="term" value="F:ATP binding"/>
    <property type="evidence" value="ECO:0007669"/>
    <property type="project" value="UniProtKB-UniRule"/>
</dbReference>
<dbReference type="GO" id="GO:0000053">
    <property type="term" value="P:argininosuccinate metabolic process"/>
    <property type="evidence" value="ECO:0007669"/>
    <property type="project" value="TreeGrafter"/>
</dbReference>
<dbReference type="GO" id="GO:0006526">
    <property type="term" value="P:L-arginine biosynthetic process"/>
    <property type="evidence" value="ECO:0007669"/>
    <property type="project" value="UniProtKB-UniRule"/>
</dbReference>
<dbReference type="GO" id="GO:0000050">
    <property type="term" value="P:urea cycle"/>
    <property type="evidence" value="ECO:0007669"/>
    <property type="project" value="TreeGrafter"/>
</dbReference>
<dbReference type="CDD" id="cd01999">
    <property type="entry name" value="ASS"/>
    <property type="match status" value="1"/>
</dbReference>
<dbReference type="FunFam" id="3.40.50.620:FF:000038">
    <property type="entry name" value="Argininosuccinate synthase"/>
    <property type="match status" value="1"/>
</dbReference>
<dbReference type="FunFam" id="3.90.1260.10:FF:000007">
    <property type="entry name" value="Argininosuccinate synthase"/>
    <property type="match status" value="1"/>
</dbReference>
<dbReference type="Gene3D" id="3.90.1260.10">
    <property type="entry name" value="Argininosuccinate synthetase, chain A, domain 2"/>
    <property type="match status" value="1"/>
</dbReference>
<dbReference type="Gene3D" id="3.40.50.620">
    <property type="entry name" value="HUPs"/>
    <property type="match status" value="1"/>
</dbReference>
<dbReference type="Gene3D" id="1.20.5.470">
    <property type="entry name" value="Single helix bin"/>
    <property type="match status" value="1"/>
</dbReference>
<dbReference type="HAMAP" id="MF_00005">
    <property type="entry name" value="Arg_succ_synth_type1"/>
    <property type="match status" value="1"/>
</dbReference>
<dbReference type="InterPro" id="IPR048268">
    <property type="entry name" value="Arginosuc_syn_C"/>
</dbReference>
<dbReference type="InterPro" id="IPR048267">
    <property type="entry name" value="Arginosuc_syn_N"/>
</dbReference>
<dbReference type="InterPro" id="IPR001518">
    <property type="entry name" value="Arginosuc_synth"/>
</dbReference>
<dbReference type="InterPro" id="IPR018223">
    <property type="entry name" value="Arginosuc_synth_CS"/>
</dbReference>
<dbReference type="InterPro" id="IPR023434">
    <property type="entry name" value="Arginosuc_synth_type_1_subfam"/>
</dbReference>
<dbReference type="InterPro" id="IPR024074">
    <property type="entry name" value="AS_cat/multimer_dom_body"/>
</dbReference>
<dbReference type="InterPro" id="IPR014729">
    <property type="entry name" value="Rossmann-like_a/b/a_fold"/>
</dbReference>
<dbReference type="NCBIfam" id="TIGR00032">
    <property type="entry name" value="argG"/>
    <property type="match status" value="1"/>
</dbReference>
<dbReference type="NCBIfam" id="NF001770">
    <property type="entry name" value="PRK00509.1"/>
    <property type="match status" value="1"/>
</dbReference>
<dbReference type="PANTHER" id="PTHR11587">
    <property type="entry name" value="ARGININOSUCCINATE SYNTHASE"/>
    <property type="match status" value="1"/>
</dbReference>
<dbReference type="PANTHER" id="PTHR11587:SF2">
    <property type="entry name" value="ARGININOSUCCINATE SYNTHASE"/>
    <property type="match status" value="1"/>
</dbReference>
<dbReference type="Pfam" id="PF20979">
    <property type="entry name" value="Arginosuc_syn_C"/>
    <property type="match status" value="1"/>
</dbReference>
<dbReference type="Pfam" id="PF00764">
    <property type="entry name" value="Arginosuc_synth"/>
    <property type="match status" value="1"/>
</dbReference>
<dbReference type="SUPFAM" id="SSF52402">
    <property type="entry name" value="Adenine nucleotide alpha hydrolases-like"/>
    <property type="match status" value="1"/>
</dbReference>
<dbReference type="SUPFAM" id="SSF69864">
    <property type="entry name" value="Argininosuccinate synthetase, C-terminal domain"/>
    <property type="match status" value="1"/>
</dbReference>
<dbReference type="PROSITE" id="PS00564">
    <property type="entry name" value="ARGININOSUCCIN_SYN_1"/>
    <property type="match status" value="1"/>
</dbReference>
<dbReference type="PROSITE" id="PS00565">
    <property type="entry name" value="ARGININOSUCCIN_SYN_2"/>
    <property type="match status" value="1"/>
</dbReference>
<protein>
    <recommendedName>
        <fullName evidence="1">Argininosuccinate synthase</fullName>
        <ecNumber evidence="1">6.3.4.5</ecNumber>
    </recommendedName>
    <alternativeName>
        <fullName evidence="1">Citrulline--aspartate ligase</fullName>
    </alternativeName>
</protein>
<comment type="catalytic activity">
    <reaction evidence="1">
        <text>L-citrulline + L-aspartate + ATP = 2-(N(omega)-L-arginino)succinate + AMP + diphosphate + H(+)</text>
        <dbReference type="Rhea" id="RHEA:10932"/>
        <dbReference type="ChEBI" id="CHEBI:15378"/>
        <dbReference type="ChEBI" id="CHEBI:29991"/>
        <dbReference type="ChEBI" id="CHEBI:30616"/>
        <dbReference type="ChEBI" id="CHEBI:33019"/>
        <dbReference type="ChEBI" id="CHEBI:57472"/>
        <dbReference type="ChEBI" id="CHEBI:57743"/>
        <dbReference type="ChEBI" id="CHEBI:456215"/>
        <dbReference type="EC" id="6.3.4.5"/>
    </reaction>
</comment>
<comment type="pathway">
    <text evidence="1">Amino-acid biosynthesis; L-arginine biosynthesis; L-arginine from L-ornithine and carbamoyl phosphate: step 2/3.</text>
</comment>
<comment type="subunit">
    <text evidence="1">Homotetramer.</text>
</comment>
<comment type="subcellular location">
    <subcellularLocation>
        <location evidence="1">Cytoplasm</location>
    </subcellularLocation>
</comment>
<comment type="similarity">
    <text evidence="1">Belongs to the argininosuccinate synthase family. Type 1 subfamily.</text>
</comment>
<gene>
    <name evidence="1" type="primary">argG</name>
    <name type="ordered locus">RSal33209_0783</name>
</gene>
<accession>A9WQ90</accession>
<evidence type="ECO:0000255" key="1">
    <source>
        <dbReference type="HAMAP-Rule" id="MF_00005"/>
    </source>
</evidence>
<proteinExistence type="inferred from homology"/>
<sequence length="420" mass="45875">MLKMHPNINKYEGVPVTDRIVLAYSGGLDTSVAIGWIGEATGAEVIAVAVDVGQGGESLETVRQRALGCGAVEAYVADARDEFANEYCMPTLKANALYQGHYPLVSAISRPVIVKHLVKAAREFGATTVAHGCTGKGNDQVRFEVGIQTLGPDLKCIAPVRDLALTRDKAIEYAERNNLPIETTKKNPYSIDQNVWGRAVETGYLEDIWNAPTKDIYDYTATPEFPPAPDEAVISFRAGVPVALDGVLLSPLQVIQELNRRAGAQGVGRIDVVEDRLVGIKSREIYEAPGAMTLITAHKHLEDVTIEREQARFKATVSQRWAELVYDGQWFSPLKRSLDVFIDDTQKYVSGDIRVVLHAGVASVNGRRTDTGLYDFNLATYDTGDTFDQSQARGFIELWGLSAKTATTRDERVAASGENA</sequence>
<name>ASSY_RENSM</name>
<keyword id="KW-0028">Amino-acid biosynthesis</keyword>
<keyword id="KW-0055">Arginine biosynthesis</keyword>
<keyword id="KW-0067">ATP-binding</keyword>
<keyword id="KW-0963">Cytoplasm</keyword>
<keyword id="KW-0436">Ligase</keyword>
<keyword id="KW-0547">Nucleotide-binding</keyword>
<keyword id="KW-1185">Reference proteome</keyword>
<reference key="1">
    <citation type="journal article" date="2008" name="J. Bacteriol.">
        <title>Genome sequence of the fish pathogen Renibacterium salmoninarum suggests reductive evolution away from an environmental Arthrobacter ancestor.</title>
        <authorList>
            <person name="Wiens G.D."/>
            <person name="Rockey D.D."/>
            <person name="Wu Z."/>
            <person name="Chang J."/>
            <person name="Levy R."/>
            <person name="Crane S."/>
            <person name="Chen D.S."/>
            <person name="Capri G.R."/>
            <person name="Burnett J.R."/>
            <person name="Sudheesh P.S."/>
            <person name="Schipma M.J."/>
            <person name="Burd H."/>
            <person name="Bhattacharyya A."/>
            <person name="Rhodes L.D."/>
            <person name="Kaul R."/>
            <person name="Strom M.S."/>
        </authorList>
    </citation>
    <scope>NUCLEOTIDE SEQUENCE [LARGE SCALE GENOMIC DNA]</scope>
    <source>
        <strain>ATCC 33209 / DSM 20767 / JCM 11484 / NBRC 15589 / NCIMB 2235</strain>
    </source>
</reference>
<feature type="chain" id="PRO_0000329472" description="Argininosuccinate synthase">
    <location>
        <begin position="1"/>
        <end position="420"/>
    </location>
</feature>
<feature type="binding site" evidence="1">
    <location>
        <begin position="23"/>
        <end position="31"/>
    </location>
    <ligand>
        <name>ATP</name>
        <dbReference type="ChEBI" id="CHEBI:30616"/>
    </ligand>
</feature>
<feature type="binding site" evidence="1">
    <location>
        <position position="102"/>
    </location>
    <ligand>
        <name>L-citrulline</name>
        <dbReference type="ChEBI" id="CHEBI:57743"/>
    </ligand>
</feature>
<feature type="binding site" evidence="1">
    <location>
        <position position="132"/>
    </location>
    <ligand>
        <name>ATP</name>
        <dbReference type="ChEBI" id="CHEBI:30616"/>
    </ligand>
</feature>
<feature type="binding site" evidence="1">
    <location>
        <position position="134"/>
    </location>
    <ligand>
        <name>L-aspartate</name>
        <dbReference type="ChEBI" id="CHEBI:29991"/>
    </ligand>
</feature>
<feature type="binding site" evidence="1">
    <location>
        <position position="138"/>
    </location>
    <ligand>
        <name>L-aspartate</name>
        <dbReference type="ChEBI" id="CHEBI:29991"/>
    </ligand>
</feature>
<feature type="binding site" evidence="1">
    <location>
        <position position="138"/>
    </location>
    <ligand>
        <name>L-citrulline</name>
        <dbReference type="ChEBI" id="CHEBI:57743"/>
    </ligand>
</feature>
<feature type="binding site" evidence="1">
    <location>
        <position position="139"/>
    </location>
    <ligand>
        <name>L-aspartate</name>
        <dbReference type="ChEBI" id="CHEBI:29991"/>
    </ligand>
</feature>
<feature type="binding site" evidence="1">
    <location>
        <position position="142"/>
    </location>
    <ligand>
        <name>L-citrulline</name>
        <dbReference type="ChEBI" id="CHEBI:57743"/>
    </ligand>
</feature>
<feature type="binding site" evidence="1">
    <location>
        <position position="190"/>
    </location>
    <ligand>
        <name>L-citrulline</name>
        <dbReference type="ChEBI" id="CHEBI:57743"/>
    </ligand>
</feature>
<feature type="binding site" evidence="1">
    <location>
        <position position="274"/>
    </location>
    <ligand>
        <name>L-citrulline</name>
        <dbReference type="ChEBI" id="CHEBI:57743"/>
    </ligand>
</feature>
<feature type="binding site" evidence="1">
    <location>
        <position position="286"/>
    </location>
    <ligand>
        <name>L-citrulline</name>
        <dbReference type="ChEBI" id="CHEBI:57743"/>
    </ligand>
</feature>